<feature type="chain" id="PRO_1000205399" description="Small ribosomal subunit protein bS6">
    <location>
        <begin position="1"/>
        <end position="95"/>
    </location>
</feature>
<reference key="1">
    <citation type="submission" date="2009-06" db="EMBL/GenBank/DDBJ databases">
        <title>Complete sequence of chromosome of Geopacillus sp. WCH70.</title>
        <authorList>
            <consortium name="US DOE Joint Genome Institute"/>
            <person name="Lucas S."/>
            <person name="Copeland A."/>
            <person name="Lapidus A."/>
            <person name="Glavina del Rio T."/>
            <person name="Dalin E."/>
            <person name="Tice H."/>
            <person name="Bruce D."/>
            <person name="Goodwin L."/>
            <person name="Pitluck S."/>
            <person name="Chertkov O."/>
            <person name="Brettin T."/>
            <person name="Detter J.C."/>
            <person name="Han C."/>
            <person name="Larimer F."/>
            <person name="Land M."/>
            <person name="Hauser L."/>
            <person name="Kyrpides N."/>
            <person name="Mikhailova N."/>
            <person name="Brumm P."/>
            <person name="Mead D.A."/>
            <person name="Richardson P."/>
        </authorList>
    </citation>
    <scope>NUCLEOTIDE SEQUENCE [LARGE SCALE GENOMIC DNA]</scope>
    <source>
        <strain>WCH70</strain>
    </source>
</reference>
<evidence type="ECO:0000255" key="1">
    <source>
        <dbReference type="HAMAP-Rule" id="MF_00360"/>
    </source>
</evidence>
<evidence type="ECO:0000305" key="2"/>
<sequence>MRKYEIMYIIRPNLDDEARQAVVDRFNNILKENGAEITNVTDWGKRRLAYEIKKYRDGHYMILNVVSEPKAVQEFDRLARISDDIIRHIVVKEEK</sequence>
<dbReference type="EMBL" id="CP001638">
    <property type="protein sequence ID" value="ACS26054.1"/>
    <property type="molecule type" value="Genomic_DNA"/>
</dbReference>
<dbReference type="SMR" id="C5D9X6"/>
<dbReference type="STRING" id="471223.GWCH70_3417"/>
<dbReference type="KEGG" id="gwc:GWCH70_3417"/>
<dbReference type="eggNOG" id="COG0360">
    <property type="taxonomic scope" value="Bacteria"/>
</dbReference>
<dbReference type="HOGENOM" id="CLU_113441_5_3_9"/>
<dbReference type="OrthoDB" id="9812702at2"/>
<dbReference type="GO" id="GO:0005737">
    <property type="term" value="C:cytoplasm"/>
    <property type="evidence" value="ECO:0007669"/>
    <property type="project" value="UniProtKB-ARBA"/>
</dbReference>
<dbReference type="GO" id="GO:1990904">
    <property type="term" value="C:ribonucleoprotein complex"/>
    <property type="evidence" value="ECO:0007669"/>
    <property type="project" value="UniProtKB-KW"/>
</dbReference>
<dbReference type="GO" id="GO:0005840">
    <property type="term" value="C:ribosome"/>
    <property type="evidence" value="ECO:0007669"/>
    <property type="project" value="UniProtKB-KW"/>
</dbReference>
<dbReference type="GO" id="GO:0070181">
    <property type="term" value="F:small ribosomal subunit rRNA binding"/>
    <property type="evidence" value="ECO:0007669"/>
    <property type="project" value="TreeGrafter"/>
</dbReference>
<dbReference type="GO" id="GO:0003735">
    <property type="term" value="F:structural constituent of ribosome"/>
    <property type="evidence" value="ECO:0007669"/>
    <property type="project" value="InterPro"/>
</dbReference>
<dbReference type="GO" id="GO:0006412">
    <property type="term" value="P:translation"/>
    <property type="evidence" value="ECO:0007669"/>
    <property type="project" value="UniProtKB-UniRule"/>
</dbReference>
<dbReference type="CDD" id="cd00473">
    <property type="entry name" value="bS6"/>
    <property type="match status" value="1"/>
</dbReference>
<dbReference type="FunFam" id="3.30.70.60:FF:000002">
    <property type="entry name" value="30S ribosomal protein S6"/>
    <property type="match status" value="1"/>
</dbReference>
<dbReference type="Gene3D" id="3.30.70.60">
    <property type="match status" value="1"/>
</dbReference>
<dbReference type="HAMAP" id="MF_00360">
    <property type="entry name" value="Ribosomal_bS6"/>
    <property type="match status" value="1"/>
</dbReference>
<dbReference type="InterPro" id="IPR000529">
    <property type="entry name" value="Ribosomal_bS6"/>
</dbReference>
<dbReference type="InterPro" id="IPR020815">
    <property type="entry name" value="Ribosomal_bS6_CS"/>
</dbReference>
<dbReference type="InterPro" id="IPR035980">
    <property type="entry name" value="Ribosomal_bS6_sf"/>
</dbReference>
<dbReference type="InterPro" id="IPR020814">
    <property type="entry name" value="Ribosomal_S6_plastid/chlpt"/>
</dbReference>
<dbReference type="InterPro" id="IPR014717">
    <property type="entry name" value="Transl_elong_EF1B/ribsomal_bS6"/>
</dbReference>
<dbReference type="NCBIfam" id="TIGR00166">
    <property type="entry name" value="S6"/>
    <property type="match status" value="1"/>
</dbReference>
<dbReference type="PANTHER" id="PTHR21011">
    <property type="entry name" value="MITOCHONDRIAL 28S RIBOSOMAL PROTEIN S6"/>
    <property type="match status" value="1"/>
</dbReference>
<dbReference type="PANTHER" id="PTHR21011:SF1">
    <property type="entry name" value="SMALL RIBOSOMAL SUBUNIT PROTEIN BS6M"/>
    <property type="match status" value="1"/>
</dbReference>
<dbReference type="Pfam" id="PF01250">
    <property type="entry name" value="Ribosomal_S6"/>
    <property type="match status" value="1"/>
</dbReference>
<dbReference type="SUPFAM" id="SSF54995">
    <property type="entry name" value="Ribosomal protein S6"/>
    <property type="match status" value="1"/>
</dbReference>
<dbReference type="PROSITE" id="PS01048">
    <property type="entry name" value="RIBOSOMAL_S6"/>
    <property type="match status" value="1"/>
</dbReference>
<accession>C5D9X6</accession>
<proteinExistence type="inferred from homology"/>
<keyword id="KW-0687">Ribonucleoprotein</keyword>
<keyword id="KW-0689">Ribosomal protein</keyword>
<keyword id="KW-0694">RNA-binding</keyword>
<keyword id="KW-0699">rRNA-binding</keyword>
<comment type="function">
    <text evidence="1">Binds together with bS18 to 16S ribosomal RNA.</text>
</comment>
<comment type="similarity">
    <text evidence="1">Belongs to the bacterial ribosomal protein bS6 family.</text>
</comment>
<protein>
    <recommendedName>
        <fullName evidence="1">Small ribosomal subunit protein bS6</fullName>
    </recommendedName>
    <alternativeName>
        <fullName evidence="2">30S ribosomal protein S6</fullName>
    </alternativeName>
</protein>
<name>RS6_GEOSW</name>
<organism>
    <name type="scientific">Geobacillus sp. (strain WCH70)</name>
    <dbReference type="NCBI Taxonomy" id="471223"/>
    <lineage>
        <taxon>Bacteria</taxon>
        <taxon>Bacillati</taxon>
        <taxon>Bacillota</taxon>
        <taxon>Bacilli</taxon>
        <taxon>Bacillales</taxon>
        <taxon>Anoxybacillaceae</taxon>
        <taxon>Geobacillus</taxon>
    </lineage>
</organism>
<gene>
    <name evidence="1" type="primary">rpsF</name>
    <name type="ordered locus">GWCH70_3417</name>
</gene>